<evidence type="ECO:0000250" key="1"/>
<evidence type="ECO:0000250" key="2">
    <source>
        <dbReference type="UniProtKB" id="Q38882"/>
    </source>
</evidence>
<evidence type="ECO:0000255" key="3">
    <source>
        <dbReference type="PROSITE-ProRule" id="PRU00041"/>
    </source>
</evidence>
<evidence type="ECO:0000255" key="4">
    <source>
        <dbReference type="PROSITE-ProRule" id="PRU00153"/>
    </source>
</evidence>
<evidence type="ECO:0000305" key="5"/>
<gene>
    <name type="primary">PLD1</name>
</gene>
<protein>
    <recommendedName>
        <fullName>Phospholipase D alpha 1</fullName>
        <shortName>PLD alpha 1</shortName>
        <ecNumber>3.1.4.4</ecNumber>
    </recommendedName>
    <alternativeName>
        <fullName>Choline phosphatase 1</fullName>
    </alternativeName>
    <alternativeName>
        <fullName>Phosphatidylcholine-hydrolyzing phospholipase D 1</fullName>
    </alternativeName>
</protein>
<organism>
    <name type="scientific">Vigna unguiculata</name>
    <name type="common">Cowpea</name>
    <dbReference type="NCBI Taxonomy" id="3917"/>
    <lineage>
        <taxon>Eukaryota</taxon>
        <taxon>Viridiplantae</taxon>
        <taxon>Streptophyta</taxon>
        <taxon>Embryophyta</taxon>
        <taxon>Tracheophyta</taxon>
        <taxon>Spermatophyta</taxon>
        <taxon>Magnoliopsida</taxon>
        <taxon>eudicotyledons</taxon>
        <taxon>Gunneridae</taxon>
        <taxon>Pentapetalae</taxon>
        <taxon>rosids</taxon>
        <taxon>fabids</taxon>
        <taxon>Fabales</taxon>
        <taxon>Fabaceae</taxon>
        <taxon>Papilionoideae</taxon>
        <taxon>50 kb inversion clade</taxon>
        <taxon>NPAAA clade</taxon>
        <taxon>indigoferoid/millettioid clade</taxon>
        <taxon>Phaseoleae</taxon>
        <taxon>Vigna</taxon>
    </lineage>
</organism>
<keyword id="KW-0106">Calcium</keyword>
<keyword id="KW-0378">Hydrolase</keyword>
<keyword id="KW-0442">Lipid degradation</keyword>
<keyword id="KW-0443">Lipid metabolism</keyword>
<keyword id="KW-0479">Metal-binding</keyword>
<keyword id="KW-0677">Repeat</keyword>
<name>PLDA1_VIGUN</name>
<accession>O04865</accession>
<reference key="1">
    <citation type="submission" date="1997-03" db="EMBL/GenBank/DDBJ databases">
        <authorList>
            <person name="el Maarouf H."/>
            <person name="Pham Thi A.T."/>
            <person name="Gareil M."/>
            <person name="D'Arcy-Lameta A."/>
            <person name="Zuily-Fodil Y."/>
        </authorList>
    </citation>
    <scope>NUCLEOTIDE SEQUENCE [MRNA]</scope>
    <source>
        <strain>cv. Epace-1</strain>
        <tissue>Leaf</tissue>
    </source>
</reference>
<feature type="chain" id="PRO_0000218824" description="Phospholipase D alpha 1">
    <location>
        <begin position="1"/>
        <end position="809"/>
    </location>
</feature>
<feature type="domain" description="C2" evidence="3">
    <location>
        <begin position="1"/>
        <end position="125"/>
    </location>
</feature>
<feature type="domain" description="PLD phosphodiesterase 1" evidence="4">
    <location>
        <begin position="326"/>
        <end position="365"/>
    </location>
</feature>
<feature type="domain" description="PLD phosphodiesterase 2" evidence="4">
    <location>
        <begin position="655"/>
        <end position="682"/>
    </location>
</feature>
<feature type="active site" evidence="4">
    <location>
        <position position="331"/>
    </location>
</feature>
<feature type="active site" evidence="4">
    <location>
        <position position="333"/>
    </location>
</feature>
<feature type="active site" evidence="4">
    <location>
        <position position="338"/>
    </location>
</feature>
<feature type="active site" evidence="4">
    <location>
        <position position="660"/>
    </location>
</feature>
<feature type="active site" evidence="4">
    <location>
        <position position="662"/>
    </location>
</feature>
<feature type="active site" evidence="4">
    <location>
        <position position="667"/>
    </location>
</feature>
<feature type="binding site" evidence="2">
    <location>
        <position position="186"/>
    </location>
    <ligand>
        <name>Ca(2+)</name>
        <dbReference type="ChEBI" id="CHEBI:29108"/>
    </ligand>
</feature>
<feature type="binding site" evidence="2">
    <location>
        <position position="331"/>
    </location>
    <ligand>
        <name>a 1,2-diacyl-sn-glycero-3-phosphate</name>
        <dbReference type="ChEBI" id="CHEBI:58608"/>
    </ligand>
</feature>
<feature type="binding site" evidence="2">
    <location>
        <position position="371"/>
    </location>
    <ligand>
        <name>Ca(2+)</name>
        <dbReference type="ChEBI" id="CHEBI:29108"/>
    </ligand>
</feature>
<feature type="binding site" evidence="2">
    <location>
        <position position="405"/>
    </location>
    <ligand>
        <name>Ca(2+)</name>
        <dbReference type="ChEBI" id="CHEBI:29108"/>
    </ligand>
</feature>
<feature type="binding site" evidence="2">
    <location>
        <position position="521"/>
    </location>
    <ligand>
        <name>a 1,2-diacyl-sn-glycero-3-phosphate</name>
        <dbReference type="ChEBI" id="CHEBI:58608"/>
    </ligand>
</feature>
<feature type="binding site" evidence="2">
    <location>
        <position position="660"/>
    </location>
    <ligand>
        <name>a 1,2-diacyl-sn-glycero-3-phosphate</name>
        <dbReference type="ChEBI" id="CHEBI:58608"/>
    </ligand>
</feature>
<feature type="binding site" evidence="2">
    <location>
        <position position="721"/>
    </location>
    <ligand>
        <name>Ca(2+)</name>
        <dbReference type="ChEBI" id="CHEBI:29108"/>
    </ligand>
</feature>
<proteinExistence type="evidence at transcript level"/>
<comment type="function">
    <text>Hydrolyzes glycerol-phospholipids at the terminal phosphodiesteric bond. Plays an important role in various cellular processes.</text>
</comment>
<comment type="catalytic activity">
    <reaction>
        <text>a 1,2-diacyl-sn-glycero-3-phosphocholine + H2O = a 1,2-diacyl-sn-glycero-3-phosphate + choline + H(+)</text>
        <dbReference type="Rhea" id="RHEA:14445"/>
        <dbReference type="ChEBI" id="CHEBI:15354"/>
        <dbReference type="ChEBI" id="CHEBI:15377"/>
        <dbReference type="ChEBI" id="CHEBI:15378"/>
        <dbReference type="ChEBI" id="CHEBI:57643"/>
        <dbReference type="ChEBI" id="CHEBI:58608"/>
        <dbReference type="EC" id="3.1.4.4"/>
    </reaction>
</comment>
<comment type="cofactor">
    <cofactor evidence="1">
        <name>Ca(2+)</name>
        <dbReference type="ChEBI" id="CHEBI:29108"/>
    </cofactor>
</comment>
<comment type="domain">
    <text>C2 domain is a calcium-binding fold, and the binding promotes the protein association with membranes. A lower affinity toward calcium can be anticipated for PLD alpha due to the absence of two potential calcium ligands.</text>
</comment>
<comment type="similarity">
    <text evidence="5">Belongs to the phospholipase D family. C2-PLD subfamily.</text>
</comment>
<sequence length="809" mass="91565">MAQILLHGTLHATIYEVDELHGGGGGNFFSKLKQNIEETVGIGKGVTKLYATIDLEKARVGRTRIIENETTNPKWNESFHIYCGHLASNIIFTVKDDNPIGATLIGRAYVPVSEVLDGHEIDKWVEILDTEKNPIEGGSKIHVRLQYFDVLKDRNWARGIRSPKYPGVPYTFFSQRQGCKVFLYQDAHVPDNFVPKIPLAGGKNYEAHRCWEDIFDAITNAKHLIYITGWSVYTEISLIRDSRRPKAGGDQTIGELLKKKASEGVRVLMLVWDDRTSVGLLKKDGLMATHDEETEQFFRDTDVHCVLCPRNPDDGGSIVQDLQISTMFTHHQKIVVVDSALPGGGGSDKRRIVSFVGGLDLCDGRYDTAFHSLFRTLDTAHHDDFHQPNFPGAAITKGGPREPWHDIHSRVEGPIAWDVLFNFEQRWRKQGGKDILAPLRELEDVIIPPSPVTFPDDHETWNVQLFRSIDGGAAFGFPDTPEDAAKAGLVSGKDNIIDRSIQDAYIHAIRRAKNFIYIENQYFLGSSFSWNNDDIKREEIGALHLIPKELSLKIVSKIEAGERFAVYVVVPMWPEGIPESSSVQAILDWQKRTIEMMYKDVVQALRAKGSDEDPRNYLTFFCLGNREVKKSGEYEPAEQPEPDSDYQRAQEARRFMIYVHTKMMIVDDEYIIIGSANINQRSMDGARDSEIAMGGYQPYHLANTQPARGQVYGFRMSLWYEHLGMLHDTFQRPESEECINKVNQIADKYWDLYSSESLERDLPGHLLRYPIGVASEGEVTELPGFEFFPDTKARILGAKADYLPPILTT</sequence>
<dbReference type="EC" id="3.1.4.4"/>
<dbReference type="EMBL" id="U92656">
    <property type="protein sequence ID" value="AAB51392.1"/>
    <property type="molecule type" value="mRNA"/>
</dbReference>
<dbReference type="PIR" id="T11695">
    <property type="entry name" value="T11695"/>
</dbReference>
<dbReference type="SMR" id="O04865"/>
<dbReference type="OrthoDB" id="405996at2759"/>
<dbReference type="BRENDA" id="3.1.4.4">
    <property type="organism ID" value="6657"/>
</dbReference>
<dbReference type="GO" id="GO:0005886">
    <property type="term" value="C:plasma membrane"/>
    <property type="evidence" value="ECO:0007669"/>
    <property type="project" value="TreeGrafter"/>
</dbReference>
<dbReference type="GO" id="GO:0005509">
    <property type="term" value="F:calcium ion binding"/>
    <property type="evidence" value="ECO:0007669"/>
    <property type="project" value="InterPro"/>
</dbReference>
<dbReference type="GO" id="GO:0004630">
    <property type="term" value="F:phospholipase D activity"/>
    <property type="evidence" value="ECO:0007669"/>
    <property type="project" value="UniProtKB-EC"/>
</dbReference>
<dbReference type="GO" id="GO:0046470">
    <property type="term" value="P:phosphatidylcholine metabolic process"/>
    <property type="evidence" value="ECO:0007669"/>
    <property type="project" value="InterPro"/>
</dbReference>
<dbReference type="GO" id="GO:0009395">
    <property type="term" value="P:phospholipid catabolic process"/>
    <property type="evidence" value="ECO:0007669"/>
    <property type="project" value="TreeGrafter"/>
</dbReference>
<dbReference type="CDD" id="cd04015">
    <property type="entry name" value="C2_plant_PLD"/>
    <property type="match status" value="1"/>
</dbReference>
<dbReference type="CDD" id="cd09199">
    <property type="entry name" value="PLDc_pPLDalpha_2"/>
    <property type="match status" value="1"/>
</dbReference>
<dbReference type="FunFam" id="3.30.870.10:FF:000027">
    <property type="entry name" value="Phospholipase D"/>
    <property type="match status" value="1"/>
</dbReference>
<dbReference type="FunFam" id="3.30.870.10:FF:000025">
    <property type="entry name" value="Phospholipase D delta"/>
    <property type="match status" value="1"/>
</dbReference>
<dbReference type="Gene3D" id="2.60.40.150">
    <property type="entry name" value="C2 domain"/>
    <property type="match status" value="1"/>
</dbReference>
<dbReference type="Gene3D" id="3.30.870.10">
    <property type="entry name" value="Endonuclease Chain A"/>
    <property type="match status" value="2"/>
</dbReference>
<dbReference type="InterPro" id="IPR000008">
    <property type="entry name" value="C2_dom"/>
</dbReference>
<dbReference type="InterPro" id="IPR035892">
    <property type="entry name" value="C2_domain_sf"/>
</dbReference>
<dbReference type="InterPro" id="IPR001736">
    <property type="entry name" value="PLipase_D/transphosphatidylase"/>
</dbReference>
<dbReference type="InterPro" id="IPR024632">
    <property type="entry name" value="PLipase_D_C"/>
</dbReference>
<dbReference type="InterPro" id="IPR015679">
    <property type="entry name" value="PLipase_D_fam"/>
</dbReference>
<dbReference type="InterPro" id="IPR011402">
    <property type="entry name" value="PLipase_D_pln"/>
</dbReference>
<dbReference type="PANTHER" id="PTHR18896">
    <property type="entry name" value="PHOSPHOLIPASE D"/>
    <property type="match status" value="1"/>
</dbReference>
<dbReference type="PANTHER" id="PTHR18896:SF115">
    <property type="entry name" value="PHOSPHOLIPASE D ALPHA 1"/>
    <property type="match status" value="1"/>
</dbReference>
<dbReference type="Pfam" id="PF00168">
    <property type="entry name" value="C2"/>
    <property type="match status" value="1"/>
</dbReference>
<dbReference type="Pfam" id="PF12357">
    <property type="entry name" value="PLD_C"/>
    <property type="match status" value="1"/>
</dbReference>
<dbReference type="Pfam" id="PF00614">
    <property type="entry name" value="PLDc"/>
    <property type="match status" value="2"/>
</dbReference>
<dbReference type="PIRSF" id="PIRSF036470">
    <property type="entry name" value="PLD_plant"/>
    <property type="match status" value="1"/>
</dbReference>
<dbReference type="SMART" id="SM00239">
    <property type="entry name" value="C2"/>
    <property type="match status" value="1"/>
</dbReference>
<dbReference type="SMART" id="SM00155">
    <property type="entry name" value="PLDc"/>
    <property type="match status" value="2"/>
</dbReference>
<dbReference type="SUPFAM" id="SSF49562">
    <property type="entry name" value="C2 domain (Calcium/lipid-binding domain, CaLB)"/>
    <property type="match status" value="1"/>
</dbReference>
<dbReference type="SUPFAM" id="SSF56024">
    <property type="entry name" value="Phospholipase D/nuclease"/>
    <property type="match status" value="2"/>
</dbReference>
<dbReference type="PROSITE" id="PS50004">
    <property type="entry name" value="C2"/>
    <property type="match status" value="1"/>
</dbReference>
<dbReference type="PROSITE" id="PS50035">
    <property type="entry name" value="PLD"/>
    <property type="match status" value="2"/>
</dbReference>